<proteinExistence type="inferred from homology"/>
<reference key="1">
    <citation type="journal article" date="2001" name="Nucleic Acids Res.">
        <title>The complete genome sequence of the murine respiratory pathogen Mycoplasma pulmonis.</title>
        <authorList>
            <person name="Chambaud I."/>
            <person name="Heilig R."/>
            <person name="Ferris S."/>
            <person name="Barbe V."/>
            <person name="Samson D."/>
            <person name="Galisson F."/>
            <person name="Moszer I."/>
            <person name="Dybvig K."/>
            <person name="Wroblewski H."/>
            <person name="Viari A."/>
            <person name="Rocha E.P.C."/>
            <person name="Blanchard A."/>
        </authorList>
    </citation>
    <scope>NUCLEOTIDE SEQUENCE [LARGE SCALE GENOMIC DNA]</scope>
    <source>
        <strain>UAB CTIP</strain>
    </source>
</reference>
<sequence>MTKNINIAIDGPSGVGKSTIAKKLADHLNYVFINTGLFYRAIAFYKDKFNLTQDLLVKELKNIKINYVNEDQIFLNNQDIAPYLRDEKISEQASEISTILDIRNFINQIIIDTMKVKKGYVIEGRDTTFKLAPDAEVRIFLDASSPIRARRRVLQNSQLNTESNYEKILDNINKRDYSDRNREVDPLHVAQGVIAIVNDHMNIEETFEKILGLVNEAIDKK</sequence>
<accession>Q98RC0</accession>
<protein>
    <recommendedName>
        <fullName evidence="1">Cytidylate kinase</fullName>
        <shortName evidence="1">CK</shortName>
        <ecNumber evidence="1">2.7.4.25</ecNumber>
    </recommendedName>
    <alternativeName>
        <fullName evidence="1">Cytidine monophosphate kinase</fullName>
        <shortName evidence="1">CMP kinase</shortName>
    </alternativeName>
</protein>
<feature type="chain" id="PRO_0000131942" description="Cytidylate kinase">
    <location>
        <begin position="1"/>
        <end position="221"/>
    </location>
</feature>
<feature type="binding site" evidence="1">
    <location>
        <begin position="11"/>
        <end position="19"/>
    </location>
    <ligand>
        <name>ATP</name>
        <dbReference type="ChEBI" id="CHEBI:30616"/>
    </ligand>
</feature>
<comment type="catalytic activity">
    <reaction evidence="1">
        <text>CMP + ATP = CDP + ADP</text>
        <dbReference type="Rhea" id="RHEA:11600"/>
        <dbReference type="ChEBI" id="CHEBI:30616"/>
        <dbReference type="ChEBI" id="CHEBI:58069"/>
        <dbReference type="ChEBI" id="CHEBI:60377"/>
        <dbReference type="ChEBI" id="CHEBI:456216"/>
        <dbReference type="EC" id="2.7.4.25"/>
    </reaction>
</comment>
<comment type="catalytic activity">
    <reaction evidence="1">
        <text>dCMP + ATP = dCDP + ADP</text>
        <dbReference type="Rhea" id="RHEA:25094"/>
        <dbReference type="ChEBI" id="CHEBI:30616"/>
        <dbReference type="ChEBI" id="CHEBI:57566"/>
        <dbReference type="ChEBI" id="CHEBI:58593"/>
        <dbReference type="ChEBI" id="CHEBI:456216"/>
        <dbReference type="EC" id="2.7.4.25"/>
    </reaction>
</comment>
<comment type="subcellular location">
    <subcellularLocation>
        <location evidence="1">Cytoplasm</location>
    </subcellularLocation>
</comment>
<comment type="similarity">
    <text evidence="1">Belongs to the cytidylate kinase family. Type 1 subfamily.</text>
</comment>
<comment type="sequence caution" evidence="2">
    <conflict type="erroneous initiation">
        <sequence resource="EMBL-CDS" id="CAC13262"/>
    </conflict>
</comment>
<organism>
    <name type="scientific">Mycoplasmopsis pulmonis (strain UAB CTIP)</name>
    <name type="common">Mycoplasma pulmonis</name>
    <dbReference type="NCBI Taxonomy" id="272635"/>
    <lineage>
        <taxon>Bacteria</taxon>
        <taxon>Bacillati</taxon>
        <taxon>Mycoplasmatota</taxon>
        <taxon>Mycoplasmoidales</taxon>
        <taxon>Metamycoplasmataceae</taxon>
        <taxon>Mycoplasmopsis</taxon>
    </lineage>
</organism>
<keyword id="KW-0067">ATP-binding</keyword>
<keyword id="KW-0963">Cytoplasm</keyword>
<keyword id="KW-0418">Kinase</keyword>
<keyword id="KW-0547">Nucleotide-binding</keyword>
<keyword id="KW-1185">Reference proteome</keyword>
<keyword id="KW-0808">Transferase</keyword>
<gene>
    <name evidence="1" type="primary">cmk</name>
    <name type="ordered locus">MYPU_0890</name>
</gene>
<dbReference type="EC" id="2.7.4.25" evidence="1"/>
<dbReference type="EMBL" id="AL445563">
    <property type="protein sequence ID" value="CAC13262.1"/>
    <property type="status" value="ALT_INIT"/>
    <property type="molecule type" value="Genomic_DNA"/>
</dbReference>
<dbReference type="PIR" id="A90523">
    <property type="entry name" value="A90523"/>
</dbReference>
<dbReference type="RefSeq" id="WP_041363906.1">
    <property type="nucleotide sequence ID" value="NC_002771.1"/>
</dbReference>
<dbReference type="SMR" id="Q98RC0"/>
<dbReference type="STRING" id="272635.gene:17576669"/>
<dbReference type="KEGG" id="mpu:MYPU_0890"/>
<dbReference type="eggNOG" id="COG0283">
    <property type="taxonomic scope" value="Bacteria"/>
</dbReference>
<dbReference type="HOGENOM" id="CLU_079959_0_2_14"/>
<dbReference type="Proteomes" id="UP000000528">
    <property type="component" value="Chromosome"/>
</dbReference>
<dbReference type="GO" id="GO:0005737">
    <property type="term" value="C:cytoplasm"/>
    <property type="evidence" value="ECO:0007669"/>
    <property type="project" value="UniProtKB-SubCell"/>
</dbReference>
<dbReference type="GO" id="GO:0005524">
    <property type="term" value="F:ATP binding"/>
    <property type="evidence" value="ECO:0007669"/>
    <property type="project" value="UniProtKB-UniRule"/>
</dbReference>
<dbReference type="GO" id="GO:0016887">
    <property type="term" value="F:ATP hydrolysis activity"/>
    <property type="evidence" value="ECO:0007669"/>
    <property type="project" value="InterPro"/>
</dbReference>
<dbReference type="GO" id="GO:0036430">
    <property type="term" value="F:CMP kinase activity"/>
    <property type="evidence" value="ECO:0007669"/>
    <property type="project" value="RHEA"/>
</dbReference>
<dbReference type="GO" id="GO:0036431">
    <property type="term" value="F:dCMP kinase activity"/>
    <property type="evidence" value="ECO:0007669"/>
    <property type="project" value="RHEA"/>
</dbReference>
<dbReference type="GO" id="GO:0006220">
    <property type="term" value="P:pyrimidine nucleotide metabolic process"/>
    <property type="evidence" value="ECO:0007669"/>
    <property type="project" value="UniProtKB-UniRule"/>
</dbReference>
<dbReference type="CDD" id="cd02020">
    <property type="entry name" value="CMPK"/>
    <property type="match status" value="1"/>
</dbReference>
<dbReference type="Gene3D" id="3.40.50.300">
    <property type="entry name" value="P-loop containing nucleotide triphosphate hydrolases"/>
    <property type="match status" value="1"/>
</dbReference>
<dbReference type="HAMAP" id="MF_00238">
    <property type="entry name" value="Cytidyl_kinase_type1"/>
    <property type="match status" value="1"/>
</dbReference>
<dbReference type="InterPro" id="IPR003593">
    <property type="entry name" value="AAA+_ATPase"/>
</dbReference>
<dbReference type="InterPro" id="IPR003136">
    <property type="entry name" value="Cytidylate_kin"/>
</dbReference>
<dbReference type="InterPro" id="IPR011994">
    <property type="entry name" value="Cytidylate_kinase_dom"/>
</dbReference>
<dbReference type="InterPro" id="IPR027417">
    <property type="entry name" value="P-loop_NTPase"/>
</dbReference>
<dbReference type="NCBIfam" id="TIGR00017">
    <property type="entry name" value="cmk"/>
    <property type="match status" value="1"/>
</dbReference>
<dbReference type="Pfam" id="PF02224">
    <property type="entry name" value="Cytidylate_kin"/>
    <property type="match status" value="1"/>
</dbReference>
<dbReference type="SMART" id="SM00382">
    <property type="entry name" value="AAA"/>
    <property type="match status" value="1"/>
</dbReference>
<dbReference type="SUPFAM" id="SSF52540">
    <property type="entry name" value="P-loop containing nucleoside triphosphate hydrolases"/>
    <property type="match status" value="1"/>
</dbReference>
<evidence type="ECO:0000255" key="1">
    <source>
        <dbReference type="HAMAP-Rule" id="MF_00238"/>
    </source>
</evidence>
<evidence type="ECO:0000305" key="2"/>
<name>KCY_MYCPU</name>